<reference key="1">
    <citation type="journal article" date="2009" name="Genome Res.">
        <title>Newly introduced genomic prophage islands are critical determinants of in vivo competitiveness in the Liverpool epidemic strain of Pseudomonas aeruginosa.</title>
        <authorList>
            <person name="Winstanley C."/>
            <person name="Langille M.G.I."/>
            <person name="Fothergill J.L."/>
            <person name="Kukavica-Ibrulj I."/>
            <person name="Paradis-Bleau C."/>
            <person name="Sanschagrin F."/>
            <person name="Thomson N.R."/>
            <person name="Winsor G.L."/>
            <person name="Quail M.A."/>
            <person name="Lennard N."/>
            <person name="Bignell A."/>
            <person name="Clarke L."/>
            <person name="Seeger K."/>
            <person name="Saunders D."/>
            <person name="Harris D."/>
            <person name="Parkhill J."/>
            <person name="Hancock R.E.W."/>
            <person name="Brinkman F.S.L."/>
            <person name="Levesque R.C."/>
        </authorList>
    </citation>
    <scope>NUCLEOTIDE SEQUENCE [LARGE SCALE GENOMIC DNA]</scope>
    <source>
        <strain>LESB58</strain>
    </source>
</reference>
<dbReference type="EMBL" id="FM209186">
    <property type="protein sequence ID" value="CAW28688.1"/>
    <property type="molecule type" value="Genomic_DNA"/>
</dbReference>
<dbReference type="RefSeq" id="WP_003083137.1">
    <property type="nucleotide sequence ID" value="NC_011770.1"/>
</dbReference>
<dbReference type="SMR" id="B7UW72"/>
<dbReference type="KEGG" id="pag:PLES_39341"/>
<dbReference type="HOGENOM" id="CLU_079503_1_1_6"/>
<dbReference type="GO" id="GO:0005886">
    <property type="term" value="C:plasma membrane"/>
    <property type="evidence" value="ECO:0007669"/>
    <property type="project" value="UniProtKB-SubCell"/>
</dbReference>
<dbReference type="GO" id="GO:0020037">
    <property type="term" value="F:heme binding"/>
    <property type="evidence" value="ECO:0007669"/>
    <property type="project" value="InterPro"/>
</dbReference>
<dbReference type="GO" id="GO:0046872">
    <property type="term" value="F:metal ion binding"/>
    <property type="evidence" value="ECO:0007669"/>
    <property type="project" value="UniProtKB-KW"/>
</dbReference>
<dbReference type="GO" id="GO:0017004">
    <property type="term" value="P:cytochrome complex assembly"/>
    <property type="evidence" value="ECO:0007669"/>
    <property type="project" value="UniProtKB-KW"/>
</dbReference>
<dbReference type="FunFam" id="2.40.50.140:FF:000104">
    <property type="entry name" value="Cytochrome c-type biogenesis protein CcmE"/>
    <property type="match status" value="1"/>
</dbReference>
<dbReference type="Gene3D" id="2.40.50.140">
    <property type="entry name" value="Nucleic acid-binding proteins"/>
    <property type="match status" value="1"/>
</dbReference>
<dbReference type="HAMAP" id="MF_01959">
    <property type="entry name" value="CcmE"/>
    <property type="match status" value="1"/>
</dbReference>
<dbReference type="InterPro" id="IPR004329">
    <property type="entry name" value="CcmE"/>
</dbReference>
<dbReference type="InterPro" id="IPR036127">
    <property type="entry name" value="CcmE-like_sf"/>
</dbReference>
<dbReference type="InterPro" id="IPR012340">
    <property type="entry name" value="NA-bd_OB-fold"/>
</dbReference>
<dbReference type="NCBIfam" id="NF009727">
    <property type="entry name" value="PRK13254.1-1"/>
    <property type="match status" value="1"/>
</dbReference>
<dbReference type="NCBIfam" id="NF009729">
    <property type="entry name" value="PRK13254.1-3"/>
    <property type="match status" value="1"/>
</dbReference>
<dbReference type="NCBIfam" id="NF009731">
    <property type="entry name" value="PRK13254.1-5"/>
    <property type="match status" value="1"/>
</dbReference>
<dbReference type="PANTHER" id="PTHR34128">
    <property type="entry name" value="CYTOCHROME C-TYPE BIOGENESIS PROTEIN CCME HOMOLOG, MITOCHONDRIAL"/>
    <property type="match status" value="1"/>
</dbReference>
<dbReference type="PANTHER" id="PTHR34128:SF2">
    <property type="entry name" value="CYTOCHROME C-TYPE BIOGENESIS PROTEIN CCME HOMOLOG, MITOCHONDRIAL"/>
    <property type="match status" value="1"/>
</dbReference>
<dbReference type="Pfam" id="PF03100">
    <property type="entry name" value="CcmE"/>
    <property type="match status" value="1"/>
</dbReference>
<dbReference type="SUPFAM" id="SSF82093">
    <property type="entry name" value="Heme chaperone CcmE"/>
    <property type="match status" value="1"/>
</dbReference>
<proteinExistence type="inferred from homology"/>
<evidence type="ECO:0000255" key="1">
    <source>
        <dbReference type="HAMAP-Rule" id="MF_01959"/>
    </source>
</evidence>
<evidence type="ECO:0000256" key="2">
    <source>
        <dbReference type="SAM" id="MobiDB-lite"/>
    </source>
</evidence>
<comment type="function">
    <text evidence="1">Heme chaperone required for the biogenesis of c-type cytochromes. Transiently binds heme delivered by CcmC and transfers the heme to apo-cytochromes in a process facilitated by CcmF and CcmH.</text>
</comment>
<comment type="subcellular location">
    <subcellularLocation>
        <location evidence="1">Cell inner membrane</location>
        <topology evidence="1">Single-pass type II membrane protein</topology>
        <orientation evidence="1">Periplasmic side</orientation>
    </subcellularLocation>
</comment>
<comment type="similarity">
    <text evidence="1">Belongs to the CcmE/CycJ family.</text>
</comment>
<feature type="chain" id="PRO_1000189041" description="Cytochrome c-type biogenesis protein CcmE">
    <location>
        <begin position="1"/>
        <end position="162"/>
    </location>
</feature>
<feature type="topological domain" description="Cytoplasmic" evidence="1">
    <location>
        <begin position="1"/>
        <end position="8"/>
    </location>
</feature>
<feature type="transmembrane region" description="Helical; Signal-anchor for type II membrane protein" evidence="1">
    <location>
        <begin position="9"/>
        <end position="29"/>
    </location>
</feature>
<feature type="topological domain" description="Periplasmic" evidence="1">
    <location>
        <begin position="30"/>
        <end position="162"/>
    </location>
</feature>
<feature type="region of interest" description="Disordered" evidence="2">
    <location>
        <begin position="139"/>
        <end position="162"/>
    </location>
</feature>
<feature type="compositionally biased region" description="Basic and acidic residues" evidence="2">
    <location>
        <begin position="139"/>
        <end position="148"/>
    </location>
</feature>
<feature type="binding site" description="covalent" evidence="1">
    <location>
        <position position="124"/>
    </location>
    <ligand>
        <name>heme</name>
        <dbReference type="ChEBI" id="CHEBI:30413"/>
    </ligand>
</feature>
<feature type="binding site" description="axial binding residue" evidence="1">
    <location>
        <position position="128"/>
    </location>
    <ligand>
        <name>heme</name>
        <dbReference type="ChEBI" id="CHEBI:30413"/>
    </ligand>
    <ligandPart>
        <name>Fe</name>
        <dbReference type="ChEBI" id="CHEBI:18248"/>
    </ligandPart>
</feature>
<sequence length="162" mass="17267">MNPVRKKRLIIVLAIVVGVGAAVGLALSALQQNINLFYTPTQIANGEAPTDTRIRAGGLVEKGSLQRSEDSLNVRFVVTDGAKEVTIAYHGILPDLFREGQGIVALGKLGGDGVLVADEVLAKHDENYMPPEVTKALKDSGQLKHYENGKAAGETSYNQEGK</sequence>
<keyword id="KW-0997">Cell inner membrane</keyword>
<keyword id="KW-1003">Cell membrane</keyword>
<keyword id="KW-0201">Cytochrome c-type biogenesis</keyword>
<keyword id="KW-0349">Heme</keyword>
<keyword id="KW-0408">Iron</keyword>
<keyword id="KW-0472">Membrane</keyword>
<keyword id="KW-0479">Metal-binding</keyword>
<keyword id="KW-0735">Signal-anchor</keyword>
<keyword id="KW-0812">Transmembrane</keyword>
<keyword id="KW-1133">Transmembrane helix</keyword>
<name>CCME_PSEA8</name>
<gene>
    <name evidence="1" type="primary">ccmE</name>
    <name evidence="1" type="synonym">cycJ</name>
    <name type="ordered locus">PLES_39341</name>
</gene>
<accession>B7UW72</accession>
<protein>
    <recommendedName>
        <fullName evidence="1">Cytochrome c-type biogenesis protein CcmE</fullName>
    </recommendedName>
    <alternativeName>
        <fullName evidence="1">Cytochrome c maturation protein E</fullName>
    </alternativeName>
    <alternativeName>
        <fullName evidence="1">Heme chaperone CcmE</fullName>
    </alternativeName>
</protein>
<organism>
    <name type="scientific">Pseudomonas aeruginosa (strain LESB58)</name>
    <dbReference type="NCBI Taxonomy" id="557722"/>
    <lineage>
        <taxon>Bacteria</taxon>
        <taxon>Pseudomonadati</taxon>
        <taxon>Pseudomonadota</taxon>
        <taxon>Gammaproteobacteria</taxon>
        <taxon>Pseudomonadales</taxon>
        <taxon>Pseudomonadaceae</taxon>
        <taxon>Pseudomonas</taxon>
    </lineage>
</organism>